<protein>
    <recommendedName>
        <fullName evidence="1">Protoheme IX farnesyltransferase 2</fullName>
        <ecNumber evidence="1">2.5.1.141</ecNumber>
    </recommendedName>
    <alternativeName>
        <fullName evidence="1">Heme B farnesyltransferase 2</fullName>
    </alternativeName>
    <alternativeName>
        <fullName evidence="1">Heme O synthase 2</fullName>
    </alternativeName>
</protein>
<comment type="function">
    <text evidence="1">Converts heme B (protoheme IX) to heme O by substitution of the vinyl group on carbon 2 of heme B porphyrin ring with a hydroxyethyl farnesyl side group.</text>
</comment>
<comment type="catalytic activity">
    <reaction evidence="1">
        <text>heme b + (2E,6E)-farnesyl diphosphate + H2O = Fe(II)-heme o + diphosphate</text>
        <dbReference type="Rhea" id="RHEA:28070"/>
        <dbReference type="ChEBI" id="CHEBI:15377"/>
        <dbReference type="ChEBI" id="CHEBI:33019"/>
        <dbReference type="ChEBI" id="CHEBI:60344"/>
        <dbReference type="ChEBI" id="CHEBI:60530"/>
        <dbReference type="ChEBI" id="CHEBI:175763"/>
        <dbReference type="EC" id="2.5.1.141"/>
    </reaction>
</comment>
<comment type="pathway">
    <text evidence="1">Porphyrin-containing compound metabolism; heme O biosynthesis; heme O from protoheme: step 1/1.</text>
</comment>
<comment type="subcellular location">
    <subcellularLocation>
        <location evidence="1">Cell inner membrane</location>
        <topology evidence="1">Multi-pass membrane protein</topology>
    </subcellularLocation>
</comment>
<comment type="miscellaneous">
    <text evidence="1">Carbon 2 of the heme B porphyrin ring is defined according to the Fischer nomenclature.</text>
</comment>
<comment type="similarity">
    <text evidence="1">Belongs to the UbiA prenyltransferase family. Protoheme IX farnesyltransferase subfamily.</text>
</comment>
<accession>A9KV13</accession>
<keyword id="KW-0997">Cell inner membrane</keyword>
<keyword id="KW-1003">Cell membrane</keyword>
<keyword id="KW-0350">Heme biosynthesis</keyword>
<keyword id="KW-0472">Membrane</keyword>
<keyword id="KW-0808">Transferase</keyword>
<keyword id="KW-0812">Transmembrane</keyword>
<keyword id="KW-1133">Transmembrane helix</keyword>
<reference key="1">
    <citation type="submission" date="2007-11" db="EMBL/GenBank/DDBJ databases">
        <title>Complete sequence of chromosome of Shewanella baltica OS195.</title>
        <authorList>
            <consortium name="US DOE Joint Genome Institute"/>
            <person name="Copeland A."/>
            <person name="Lucas S."/>
            <person name="Lapidus A."/>
            <person name="Barry K."/>
            <person name="Glavina del Rio T."/>
            <person name="Dalin E."/>
            <person name="Tice H."/>
            <person name="Pitluck S."/>
            <person name="Chain P."/>
            <person name="Malfatti S."/>
            <person name="Shin M."/>
            <person name="Vergez L."/>
            <person name="Schmutz J."/>
            <person name="Larimer F."/>
            <person name="Land M."/>
            <person name="Hauser L."/>
            <person name="Kyrpides N."/>
            <person name="Kim E."/>
            <person name="Brettar I."/>
            <person name="Rodrigues J."/>
            <person name="Konstantinidis K."/>
            <person name="Klappenbach J."/>
            <person name="Hofle M."/>
            <person name="Tiedje J."/>
            <person name="Richardson P."/>
        </authorList>
    </citation>
    <scope>NUCLEOTIDE SEQUENCE [LARGE SCALE GENOMIC DNA]</scope>
    <source>
        <strain>OS195</strain>
    </source>
</reference>
<organism>
    <name type="scientific">Shewanella baltica (strain OS195)</name>
    <dbReference type="NCBI Taxonomy" id="399599"/>
    <lineage>
        <taxon>Bacteria</taxon>
        <taxon>Pseudomonadati</taxon>
        <taxon>Pseudomonadota</taxon>
        <taxon>Gammaproteobacteria</taxon>
        <taxon>Alteromonadales</taxon>
        <taxon>Shewanellaceae</taxon>
        <taxon>Shewanella</taxon>
    </lineage>
</organism>
<proteinExistence type="inferred from homology"/>
<dbReference type="EC" id="2.5.1.141" evidence="1"/>
<dbReference type="EMBL" id="CP000891">
    <property type="protein sequence ID" value="ABX51512.1"/>
    <property type="molecule type" value="Genomic_DNA"/>
</dbReference>
<dbReference type="SMR" id="A9KV13"/>
<dbReference type="KEGG" id="sbn:Sbal195_4354"/>
<dbReference type="HOGENOM" id="CLU_029631_0_0_6"/>
<dbReference type="UniPathway" id="UPA00834">
    <property type="reaction ID" value="UER00712"/>
</dbReference>
<dbReference type="Proteomes" id="UP000000770">
    <property type="component" value="Chromosome"/>
</dbReference>
<dbReference type="GO" id="GO:0005886">
    <property type="term" value="C:plasma membrane"/>
    <property type="evidence" value="ECO:0007669"/>
    <property type="project" value="UniProtKB-SubCell"/>
</dbReference>
<dbReference type="GO" id="GO:0008495">
    <property type="term" value="F:protoheme IX farnesyltransferase activity"/>
    <property type="evidence" value="ECO:0007669"/>
    <property type="project" value="UniProtKB-UniRule"/>
</dbReference>
<dbReference type="GO" id="GO:0048034">
    <property type="term" value="P:heme O biosynthetic process"/>
    <property type="evidence" value="ECO:0007669"/>
    <property type="project" value="UniProtKB-UniRule"/>
</dbReference>
<dbReference type="CDD" id="cd13957">
    <property type="entry name" value="PT_UbiA_Cox10"/>
    <property type="match status" value="1"/>
</dbReference>
<dbReference type="FunFam" id="1.10.357.140:FF:000001">
    <property type="entry name" value="Protoheme IX farnesyltransferase"/>
    <property type="match status" value="1"/>
</dbReference>
<dbReference type="Gene3D" id="1.10.357.140">
    <property type="entry name" value="UbiA prenyltransferase"/>
    <property type="match status" value="1"/>
</dbReference>
<dbReference type="HAMAP" id="MF_00154">
    <property type="entry name" value="CyoE_CtaB"/>
    <property type="match status" value="1"/>
</dbReference>
<dbReference type="InterPro" id="IPR006369">
    <property type="entry name" value="Protohaem_IX_farnesylTrfase"/>
</dbReference>
<dbReference type="InterPro" id="IPR000537">
    <property type="entry name" value="UbiA_prenyltransferase"/>
</dbReference>
<dbReference type="InterPro" id="IPR030470">
    <property type="entry name" value="UbiA_prenylTrfase_CS"/>
</dbReference>
<dbReference type="InterPro" id="IPR044878">
    <property type="entry name" value="UbiA_sf"/>
</dbReference>
<dbReference type="NCBIfam" id="TIGR01473">
    <property type="entry name" value="cyoE_ctaB"/>
    <property type="match status" value="1"/>
</dbReference>
<dbReference type="NCBIfam" id="NF003348">
    <property type="entry name" value="PRK04375.1-1"/>
    <property type="match status" value="1"/>
</dbReference>
<dbReference type="PANTHER" id="PTHR43448">
    <property type="entry name" value="PROTOHEME IX FARNESYLTRANSFERASE, MITOCHONDRIAL"/>
    <property type="match status" value="1"/>
</dbReference>
<dbReference type="PANTHER" id="PTHR43448:SF2">
    <property type="entry name" value="PROTOHEME IX FARNESYLTRANSFERASE, MITOCHONDRIAL"/>
    <property type="match status" value="1"/>
</dbReference>
<dbReference type="Pfam" id="PF01040">
    <property type="entry name" value="UbiA"/>
    <property type="match status" value="1"/>
</dbReference>
<dbReference type="PROSITE" id="PS00943">
    <property type="entry name" value="UBIA"/>
    <property type="match status" value="1"/>
</dbReference>
<gene>
    <name evidence="1" type="primary">cyoE2</name>
    <name type="ordered locus">Sbal195_4354</name>
</gene>
<evidence type="ECO:0000255" key="1">
    <source>
        <dbReference type="HAMAP-Rule" id="MF_00154"/>
    </source>
</evidence>
<feature type="chain" id="PRO_0000346013" description="Protoheme IX farnesyltransferase 2">
    <location>
        <begin position="1"/>
        <end position="289"/>
    </location>
</feature>
<feature type="transmembrane region" description="Helical" evidence="1">
    <location>
        <begin position="4"/>
        <end position="24"/>
    </location>
</feature>
<feature type="transmembrane region" description="Helical" evidence="1">
    <location>
        <begin position="28"/>
        <end position="48"/>
    </location>
</feature>
<feature type="transmembrane region" description="Helical" evidence="1">
    <location>
        <begin position="66"/>
        <end position="86"/>
    </location>
</feature>
<feature type="transmembrane region" description="Helical" evidence="1">
    <location>
        <begin position="99"/>
        <end position="118"/>
    </location>
</feature>
<feature type="transmembrane region" description="Helical" evidence="1">
    <location>
        <begin position="124"/>
        <end position="144"/>
    </location>
</feature>
<feature type="transmembrane region" description="Helical" evidence="1">
    <location>
        <begin position="155"/>
        <end position="175"/>
    </location>
</feature>
<feature type="transmembrane region" description="Helical" evidence="1">
    <location>
        <begin position="199"/>
        <end position="219"/>
    </location>
</feature>
<feature type="transmembrane region" description="Helical" evidence="1">
    <location>
        <begin position="221"/>
        <end position="241"/>
    </location>
</feature>
<feature type="transmembrane region" description="Helical" evidence="1">
    <location>
        <begin position="256"/>
        <end position="276"/>
    </location>
</feature>
<name>CYOE2_SHEB9</name>
<sequence>MTKPGIIFGNLISVAGGFLLAAKGDVNLVLMLASLVGLSLVVASGCAINNCIDRDIDAKMQRTCKRVTVTGEIAVGNVLAFGLALGVLGFSILALFTNALALLFAVIGYIVYVGVYSLYMKRNSVYGTLVGSFSGAVPPVVGYCSVTGQMDMGAAILLLMFSLWQMPHSYAIAIFRFNDYAAANIPVLPVAEGMTKAKLHIVLYIAVFALVSALLPLAGYTGIAFMAVTCATSLWWLAMALKGYRHGVDMQRWARQVFGFSIITITALSVTMALDFQVVSQAPLLTLVK</sequence>